<name>GLCDH_HALMT</name>
<comment type="function">
    <text evidence="2 6">Catalyzes the NAD(P)(+)-dependent oxidation of D-glucose to D-gluconate. Displays broad substrate specificity since it is able to catalyze the oxidation of a number of alternative aldose sugars, such as D-xylose, D-galactose, and D-fucose, to the corresponding glyconate. Can utilize both NAD(+) and NADP(+) as electron acceptor, with a preference for NADP(+). Physiologically, seems to be involved in the degradation of glucose through a modified Entner-Doudoroff pathway.</text>
</comment>
<comment type="catalytic activity">
    <reaction evidence="2 6">
        <text>D-glucose + NAD(+) = D-glucono-1,5-lactone + NADH + H(+)</text>
        <dbReference type="Rhea" id="RHEA:14293"/>
        <dbReference type="ChEBI" id="CHEBI:4167"/>
        <dbReference type="ChEBI" id="CHEBI:15378"/>
        <dbReference type="ChEBI" id="CHEBI:16217"/>
        <dbReference type="ChEBI" id="CHEBI:57540"/>
        <dbReference type="ChEBI" id="CHEBI:57945"/>
        <dbReference type="EC" id="1.1.1.47"/>
    </reaction>
</comment>
<comment type="catalytic activity">
    <reaction evidence="2 6">
        <text>D-glucose + NADP(+) = D-glucono-1,5-lactone + NADPH + H(+)</text>
        <dbReference type="Rhea" id="RHEA:14405"/>
        <dbReference type="ChEBI" id="CHEBI:4167"/>
        <dbReference type="ChEBI" id="CHEBI:15378"/>
        <dbReference type="ChEBI" id="CHEBI:16217"/>
        <dbReference type="ChEBI" id="CHEBI:57783"/>
        <dbReference type="ChEBI" id="CHEBI:58349"/>
        <dbReference type="EC" id="1.1.1.47"/>
    </reaction>
</comment>
<comment type="cofactor">
    <cofactor evidence="7">
        <name>Zn(2+)</name>
        <dbReference type="ChEBI" id="CHEBI:29105"/>
    </cofactor>
    <text evidence="7">Binds 2 Zn(2+) ions per subunit. One of the zinc atoms is essential for catalytic activity while the other has a structural function, according to Ref.4. However, the crystal structures show a single zinc ion, the catalytic one.</text>
</comment>
<comment type="activity regulation">
    <text evidence="6 7">Activated by molar concentrations of KCl or NaCl. Inhibited by EDTA in vitro.</text>
</comment>
<comment type="biophysicochemical properties">
    <kinetics>
        <KM evidence="6">1.2 mM for NAD(+) (at 40 degrees Celsius and pH 8.8)</KM>
        <KM evidence="6">0.024 mM for NADP(+) (at 40 degrees Celsius and pH 8.8)</KM>
        <KM evidence="6">3.9 mM for beta-D-glucose (in the presence of NADP(+), at 40 degrees Celsius and pH 8.8)</KM>
        <KM evidence="7">4.7 mM for D-glucose (at 40 degrees Celsius and pH 8.8)</KM>
        <KM evidence="7">6.9 mM for D-xylose (at 40 degrees Celsius and pH 8.8)</KM>
        <Vmax evidence="7">93.0 umol/min/mg enzyme for the oxidation of D-glucose by NADP(+) (at 40 degrees Celsius and pH 8.8)</Vmax>
        <Vmax evidence="7">80.0 umol/min/mg enzyme for the oxidation of D-xylose by NADP(+) (at 40 degrees Celsius and pH 8.8)</Vmax>
    </kinetics>
</comment>
<comment type="subunit">
    <text evidence="2 3 6">Homodimer.</text>
</comment>
<comment type="interaction">
    <interactant intactId="EBI-15576464">
        <id>Q977U7</id>
    </interactant>
    <interactant intactId="EBI-15576464">
        <id>Q977U7</id>
        <label>gdh</label>
    </interactant>
    <organismsDiffer>false</organismsDiffer>
    <experiments>2</experiments>
</comment>
<comment type="induction">
    <text evidence="6">Up-regulated by glucose.</text>
</comment>
<comment type="mass spectrometry"/>
<comment type="miscellaneous">
    <text evidence="5">The reaction follows an ordered Bi-Bi kinetic mechanism, involving an ordered binding of NADP(+) and D-glucose, followed by an ordered released of gluconolactone and NADPH.</text>
</comment>
<comment type="similarity">
    <text evidence="1">Belongs to the zinc-containing alcohol dehydrogenase family. Glucose 1-dehydrogenase subfamily.</text>
</comment>
<reference key="1">
    <citation type="journal article" date="2001" name="FEMS Microbiol. Lett.">
        <title>Heterologous overexpression of glucose dehydrogenase from the halophilic archaeon Haloferax mediterranei, an enzyme of the medium chain dehydrogenase/reductase family.</title>
        <authorList>
            <person name="Pire C."/>
            <person name="Esclapez J."/>
            <person name="Ferrer J."/>
            <person name="Bonete M.J."/>
        </authorList>
    </citation>
    <scope>NUCLEOTIDE SEQUENCE [GENOMIC DNA]</scope>
    <scope>FUNCTION</scope>
    <scope>CATALYTIC ACTIVITY</scope>
    <scope>SUBUNIT</scope>
    <source>
        <strain>ATCC 33500 / DSM 1411 / JCM 8866 / NBRC 14739 / NCIMB 2177 / R-4</strain>
    </source>
</reference>
<reference key="2">
    <citation type="journal article" date="2012" name="J. Bacteriol.">
        <title>Complete genome sequence of the metabolically versatile halophilic archaeon Haloferax mediterranei, a poly(3-hydroxybutyrate-co-3-hydroxyvalerate) producer.</title>
        <authorList>
            <person name="Han J."/>
            <person name="Zhang F."/>
            <person name="Hou J."/>
            <person name="Liu X."/>
            <person name="Li M."/>
            <person name="Liu H."/>
            <person name="Cai L."/>
            <person name="Zhang B."/>
            <person name="Chen Y."/>
            <person name="Zhou J."/>
            <person name="Hu S."/>
            <person name="Xiang H."/>
        </authorList>
    </citation>
    <scope>NUCLEOTIDE SEQUENCE [LARGE SCALE GENOMIC DNA]</scope>
    <source>
        <strain>ATCC 33500 / DSM 1411 / JCM 8866 / NBRC 14739 / NCIMB 2177 / R-4</strain>
    </source>
</reference>
<reference key="3">
    <citation type="journal article" date="1996" name="FEBS Lett.">
        <title>Glucose dehydrogenase from the halophilic Archaeon Haloferax mediterranei: enzyme purification, characterisation and N-terminal sequence.</title>
        <authorList>
            <person name="Bonete M.J."/>
            <person name="Pire C."/>
            <person name="Llorca F.I."/>
            <person name="Camacho M.L."/>
        </authorList>
    </citation>
    <scope>PROTEIN SEQUENCE OF 1-17</scope>
    <scope>FUNCTION</scope>
    <scope>CATALYTIC ACTIVITY</scope>
    <scope>SUBSTRATE SPECIFICITY</scope>
    <scope>KINETIC PARAMETERS</scope>
    <scope>ACTIVITY REGULATION</scope>
    <scope>INDUCTION</scope>
    <scope>SUBUNIT</scope>
    <source>
        <strain>ATCC 33500 / DSM 1411 / JCM 8866 / NBRC 14739 / NCIMB 2177 / R-4</strain>
    </source>
</reference>
<reference key="4">
    <citation type="journal article" date="2000" name="J. Mol. Catal., B Enzym.">
        <title>NAD(P)(+)-glucose dehydrogenase from Haloferax mediterranei: kinetic mechanism and metal content.</title>
        <authorList>
            <person name="Pire C."/>
            <person name="Camacho M.L."/>
            <person name="Ferrer J."/>
            <person name="Hough D.W."/>
            <person name="Bonete M.J."/>
        </authorList>
    </citation>
    <scope>PROTEIN SEQUENCE OF 1-38</scope>
    <scope>COFACTOR</scope>
    <scope>KINETIC PARAMETERS</scope>
    <scope>ACTIVITY REGULATION</scope>
    <scope>MASS SPECTROMETRY</scope>
    <scope>KINETIC MECHANISM</scope>
    <source>
        <strain>ATCC 33500 / DSM 1411 / JCM 8866 / NBRC 14739 / NCIMB 2177 / R-4</strain>
    </source>
</reference>
<reference key="5">
    <citation type="journal article" date="2001" name="Acta Crystallogr. D">
        <title>Crystallization and preliminary X-ray analysis of glucose dehydrogenase from Haloferax mediterranei.</title>
        <authorList>
            <person name="Ferrer J."/>
            <person name="Fisher M."/>
            <person name="Burke J."/>
            <person name="Sedelnikova S.E."/>
            <person name="Baker P.J."/>
            <person name="Gilmour D.J."/>
            <person name="Bonete M.J."/>
            <person name="Pire C."/>
            <person name="Esclapez J."/>
            <person name="Rice D.W."/>
        </authorList>
    </citation>
    <scope>CRYSTALLIZATION</scope>
    <source>
        <strain>ATCC 33500 / DSM 1411 / JCM 8866 / NBRC 14739 / NCIMB 2177 / R-4</strain>
    </source>
</reference>
<reference key="6">
    <citation type="journal article" date="2005" name="Acta Crystallogr. F">
        <title>Crystallization and preliminary X-ray analysis of binary and ternary complexes of Haloferax mediterranei glucose dehydrogenase.</title>
        <authorList>
            <person name="Esclapez J."/>
            <person name="Britton K.L."/>
            <person name="Baker P.J."/>
            <person name="Fisher M."/>
            <person name="Pire C."/>
            <person name="Ferrer J."/>
            <person name="Bonete M.J."/>
            <person name="Rice D.W."/>
        </authorList>
    </citation>
    <scope>CRYSTALLIZATION</scope>
    <source>
        <strain>ATCC 33500 / DSM 1411 / JCM 8866 / NBRC 14739 / NCIMB 2177 / R-4</strain>
    </source>
</reference>
<reference key="7">
    <citation type="journal article" date="2007" name="FEBS Lett.">
        <title>Analysis of acidic surface of Haloferax mediterranei glucose dehydrogenase by site-directed mutagenesis.</title>
        <authorList>
            <person name="Esclapez J."/>
            <person name="Pire C."/>
            <person name="Bautista V."/>
            <person name="Martinez-Espinosa R.M."/>
            <person name="Ferrer J."/>
            <person name="Bonete M.J."/>
        </authorList>
    </citation>
    <scope>MUTAGENESIS OF ASP-172; ASP-216 AND ASP-344</scope>
    <source>
        <strain>ATCC 33500 / DSM 1411 / JCM 8866 / NBRC 14739 / NCIMB 2177 / R-4</strain>
    </source>
</reference>
<reference key="8">
    <citation type="journal article" date="2006" name="Proc. Natl. Acad. Sci. U.S.A.">
        <title>Analysis of protein solvent interactions in glucose dehydrogenase from the extreme halophile Haloferax mediterranei.</title>
        <authorList>
            <person name="Britton K.L."/>
            <person name="Baker P.J."/>
            <person name="Fisher M."/>
            <person name="Ruzheinikov S."/>
            <person name="Gilmour D.J."/>
            <person name="Bonete M.J."/>
            <person name="Ferrer J."/>
            <person name="Pire C."/>
            <person name="Esclapez J."/>
            <person name="Rice D.W."/>
        </authorList>
    </citation>
    <scope>X-RAY CRYSTALLOGRAPHY (1.60 ANGSTROMS) OF WILD-TYPE AND MUTANT CYS-38 IN COMPLEX WITH NADP AND ZINC</scope>
    <source>
        <strain>ATCC 33500 / DSM 1411 / JCM 8866 / NBRC 14739 / NCIMB 2177 / R-4</strain>
    </source>
</reference>
<reference key="9">
    <citation type="journal article" date="2009" name="Proc. Natl. Acad. Sci. U.S.A.">
        <title>Active site dynamics in the zinc-dependent medium chain alcohol dehydrogenase superfamily.</title>
        <authorList>
            <person name="Baker P.J."/>
            <person name="Britton K.L."/>
            <person name="Fisher M."/>
            <person name="Esclapez J."/>
            <person name="Pire C."/>
            <person name="Bonete M.J."/>
            <person name="Ferrer J."/>
            <person name="Rice D.W."/>
        </authorList>
    </citation>
    <scope>X-RAY CRYSTALLOGRAPHY (2.00 ANGSTROMS) IN COMPLEXES WITH BETA-D-GLUCOSE; D-GLUCONO-1,5-LACTONE; NADP AND ZINC</scope>
    <scope>REACTION MECHANISM</scope>
    <source>
        <strain>ATCC 33500 / DSM 1411 / JCM 8866 / NBRC 14739 / NCIMB 2177 / R-4</strain>
    </source>
</reference>
<dbReference type="EC" id="1.1.1.47" evidence="1 2 6"/>
<dbReference type="EMBL" id="AJ251111">
    <property type="protein sequence ID" value="CAC42505.1"/>
    <property type="molecule type" value="Genomic_DNA"/>
</dbReference>
<dbReference type="EMBL" id="CP001868">
    <property type="protein sequence ID" value="AFK18806.1"/>
    <property type="molecule type" value="Genomic_DNA"/>
</dbReference>
<dbReference type="PIR" id="S66213">
    <property type="entry name" value="S66213"/>
</dbReference>
<dbReference type="RefSeq" id="WP_004572583.1">
    <property type="nucleotide sequence ID" value="NC_017941.2"/>
</dbReference>
<dbReference type="PDB" id="2B5V">
    <property type="method" value="X-ray"/>
    <property type="resolution" value="2.00 A"/>
    <property type="chains" value="A=1-357"/>
</dbReference>
<dbReference type="PDB" id="2B5W">
    <property type="method" value="X-ray"/>
    <property type="resolution" value="1.60 A"/>
    <property type="chains" value="A=1-357"/>
</dbReference>
<dbReference type="PDB" id="2VWG">
    <property type="method" value="X-ray"/>
    <property type="resolution" value="2.00 A"/>
    <property type="chains" value="A=1-357"/>
</dbReference>
<dbReference type="PDB" id="2VWH">
    <property type="method" value="X-ray"/>
    <property type="resolution" value="2.03 A"/>
    <property type="chains" value="A=1-357"/>
</dbReference>
<dbReference type="PDB" id="2VWP">
    <property type="method" value="X-ray"/>
    <property type="resolution" value="2.01 A"/>
    <property type="chains" value="A=1-357"/>
</dbReference>
<dbReference type="PDB" id="2VWQ">
    <property type="method" value="X-ray"/>
    <property type="resolution" value="2.10 A"/>
    <property type="chains" value="A=1-357"/>
</dbReference>
<dbReference type="PDBsum" id="2B5V"/>
<dbReference type="PDBsum" id="2B5W"/>
<dbReference type="PDBsum" id="2VWG"/>
<dbReference type="PDBsum" id="2VWH"/>
<dbReference type="PDBsum" id="2VWP"/>
<dbReference type="PDBsum" id="2VWQ"/>
<dbReference type="SMR" id="Q977U7"/>
<dbReference type="DIP" id="DIP-48672N"/>
<dbReference type="STRING" id="523841.HFX_1090"/>
<dbReference type="PaxDb" id="523841-HFX_1090"/>
<dbReference type="GeneID" id="40156447"/>
<dbReference type="KEGG" id="hme:HFX_1090"/>
<dbReference type="eggNOG" id="arCOG01459">
    <property type="taxonomic scope" value="Archaea"/>
</dbReference>
<dbReference type="HOGENOM" id="CLU_026673_1_0_2"/>
<dbReference type="OrthoDB" id="41394at2157"/>
<dbReference type="BioCyc" id="MetaCyc:MONOMER-4902"/>
<dbReference type="BRENDA" id="1.1.1.113">
    <property type="organism ID" value="2566"/>
</dbReference>
<dbReference type="BRENDA" id="1.1.1.119">
    <property type="organism ID" value="2566"/>
</dbReference>
<dbReference type="BRENDA" id="1.1.1.175">
    <property type="organism ID" value="2566"/>
</dbReference>
<dbReference type="BRENDA" id="1.1.1.47">
    <property type="organism ID" value="2566"/>
</dbReference>
<dbReference type="EvolutionaryTrace" id="Q977U7"/>
<dbReference type="Proteomes" id="UP000006469">
    <property type="component" value="Chromosome"/>
</dbReference>
<dbReference type="GO" id="GO:0005536">
    <property type="term" value="F:D-glucose binding"/>
    <property type="evidence" value="ECO:0000314"/>
    <property type="project" value="UniProtKB"/>
</dbReference>
<dbReference type="GO" id="GO:0047934">
    <property type="term" value="F:glucose 1-dehydrogenase (NAD+) activity"/>
    <property type="evidence" value="ECO:0007669"/>
    <property type="project" value="RHEA"/>
</dbReference>
<dbReference type="GO" id="GO:0047935">
    <property type="term" value="F:glucose 1-dehydrogenase (NADP+) activity"/>
    <property type="evidence" value="ECO:0007669"/>
    <property type="project" value="RHEA"/>
</dbReference>
<dbReference type="GO" id="GO:0047936">
    <property type="term" value="F:glucose 1-dehydrogenase [NAD(P)+] activity"/>
    <property type="evidence" value="ECO:0000314"/>
    <property type="project" value="UniProtKB"/>
</dbReference>
<dbReference type="GO" id="GO:0042802">
    <property type="term" value="F:identical protein binding"/>
    <property type="evidence" value="ECO:0000353"/>
    <property type="project" value="IntAct"/>
</dbReference>
<dbReference type="GO" id="GO:0070403">
    <property type="term" value="F:NAD+ binding"/>
    <property type="evidence" value="ECO:0000314"/>
    <property type="project" value="UniProtKB"/>
</dbReference>
<dbReference type="GO" id="GO:0070401">
    <property type="term" value="F:NADP+ binding"/>
    <property type="evidence" value="ECO:0000314"/>
    <property type="project" value="UniProtKB"/>
</dbReference>
<dbReference type="GO" id="GO:0042803">
    <property type="term" value="F:protein homodimerization activity"/>
    <property type="evidence" value="ECO:0000314"/>
    <property type="project" value="UniProtKB"/>
</dbReference>
<dbReference type="GO" id="GO:0008270">
    <property type="term" value="F:zinc ion binding"/>
    <property type="evidence" value="ECO:0000314"/>
    <property type="project" value="UniProtKB"/>
</dbReference>
<dbReference type="GO" id="GO:0019595">
    <property type="term" value="P:non-phosphorylated glucose catabolic process"/>
    <property type="evidence" value="ECO:0000314"/>
    <property type="project" value="UniProtKB"/>
</dbReference>
<dbReference type="CDD" id="cd08230">
    <property type="entry name" value="glucose_DH"/>
    <property type="match status" value="1"/>
</dbReference>
<dbReference type="FunFam" id="3.40.50.720:FF:001402">
    <property type="entry name" value="Glucose 1-dehydrogenase"/>
    <property type="match status" value="1"/>
</dbReference>
<dbReference type="Gene3D" id="3.90.180.10">
    <property type="entry name" value="Medium-chain alcohol dehydrogenases, catalytic domain"/>
    <property type="match status" value="1"/>
</dbReference>
<dbReference type="Gene3D" id="3.40.50.720">
    <property type="entry name" value="NAD(P)-binding Rossmann-like Domain"/>
    <property type="match status" value="1"/>
</dbReference>
<dbReference type="HAMAP" id="MF_02127">
    <property type="entry name" value="Glucose_DH"/>
    <property type="match status" value="1"/>
</dbReference>
<dbReference type="InterPro" id="IPR013154">
    <property type="entry name" value="ADH-like_N"/>
</dbReference>
<dbReference type="InterPro" id="IPR026583">
    <property type="entry name" value="Glc_1-DH_arc"/>
</dbReference>
<dbReference type="InterPro" id="IPR031640">
    <property type="entry name" value="Glu_dehyd_C"/>
</dbReference>
<dbReference type="InterPro" id="IPR011032">
    <property type="entry name" value="GroES-like_sf"/>
</dbReference>
<dbReference type="InterPro" id="IPR036291">
    <property type="entry name" value="NAD(P)-bd_dom_sf"/>
</dbReference>
<dbReference type="PANTHER" id="PTHR43189:SF2">
    <property type="entry name" value="GLUCOSE 1-DEHYDROGENASE"/>
    <property type="match status" value="1"/>
</dbReference>
<dbReference type="PANTHER" id="PTHR43189">
    <property type="entry name" value="ZINC-TYPE ALCOHOL DEHYDROGENASE-LIKE PROTEIN C1198.01-RELATED"/>
    <property type="match status" value="1"/>
</dbReference>
<dbReference type="Pfam" id="PF08240">
    <property type="entry name" value="ADH_N"/>
    <property type="match status" value="1"/>
</dbReference>
<dbReference type="Pfam" id="PF16912">
    <property type="entry name" value="Glu_dehyd_C"/>
    <property type="match status" value="1"/>
</dbReference>
<dbReference type="SUPFAM" id="SSF50129">
    <property type="entry name" value="GroES-like"/>
    <property type="match status" value="1"/>
</dbReference>
<dbReference type="SUPFAM" id="SSF51735">
    <property type="entry name" value="NAD(P)-binding Rossmann-fold domains"/>
    <property type="match status" value="1"/>
</dbReference>
<sequence>MKAIAVKRGEDRPVVIEKPRPEPESGEALVRTLRVGVDGTDHEVIAGGHGGFPEGEDHLVLGHEAVGVVVDPNDTELEEGDIVVPTVRRPPASGTNEYFERDQPDMAPDGMYFERGIVGAHGYMSEFFTSPEKYLVRIPRSQAELGFLIEPISITEKALEHAYASRSAFDWDPSSAFVLGNGSLGLLTLAMLKVDDKGYENLYCLGRRDRPDPTIDIIEELDATYVDSRQTPVEDVPDVYEQMDFIYEATGFPKHAIQSVQALAPNGVGALLGVPSDWAFEVDAGAFHREMVLHNKALVGSVNSHVEHFEAATVTFTKLPKWFLEDLVTGVHPLSEFEAAFDDDDTTIKTAIEFSTV</sequence>
<organism>
    <name type="scientific">Haloferax mediterranei (strain ATCC 33500 / DSM 1411 / JCM 8866 / NBRC 14739 / NCIMB 2177 / R-4)</name>
    <name type="common">Halobacterium mediterranei</name>
    <dbReference type="NCBI Taxonomy" id="523841"/>
    <lineage>
        <taxon>Archaea</taxon>
        <taxon>Methanobacteriati</taxon>
        <taxon>Methanobacteriota</taxon>
        <taxon>Stenosarchaea group</taxon>
        <taxon>Halobacteria</taxon>
        <taxon>Halobacteriales</taxon>
        <taxon>Haloferacaceae</taxon>
        <taxon>Haloferax</taxon>
    </lineage>
</organism>
<protein>
    <recommendedName>
        <fullName evidence="1">Glucose 1-dehydrogenase</fullName>
        <shortName evidence="1">GDH</shortName>
        <shortName evidence="1">GlcDH</shortName>
        <ecNumber evidence="1 2 6">1.1.1.47</ecNumber>
    </recommendedName>
</protein>
<feature type="chain" id="PRO_0000414832" description="Glucose 1-dehydrogenase">
    <location>
        <begin position="1"/>
        <end position="357"/>
    </location>
</feature>
<feature type="binding site" evidence="3 5">
    <location>
        <position position="38"/>
    </location>
    <ligand>
        <name>Zn(2+)</name>
        <dbReference type="ChEBI" id="CHEBI:29105"/>
        <note>catalytic</note>
    </ligand>
</feature>
<feature type="binding site" evidence="5">
    <location>
        <position position="40"/>
    </location>
    <ligand>
        <name>substrate</name>
    </ligand>
</feature>
<feature type="binding site" evidence="5">
    <location>
        <position position="49"/>
    </location>
    <ligand>
        <name>substrate</name>
    </ligand>
</feature>
<feature type="binding site" evidence="3 5">
    <location>
        <position position="63"/>
    </location>
    <ligand>
        <name>Zn(2+)</name>
        <dbReference type="ChEBI" id="CHEBI:29105"/>
        <note>catalytic</note>
    </ligand>
</feature>
<feature type="binding site" evidence="3 5">
    <location>
        <position position="64"/>
    </location>
    <ligand>
        <name>Zn(2+)</name>
        <dbReference type="ChEBI" id="CHEBI:29105"/>
        <note>catalytic</note>
    </ligand>
</feature>
<feature type="binding site" evidence="5">
    <location>
        <position position="114"/>
    </location>
    <ligand>
        <name>substrate</name>
    </ligand>
</feature>
<feature type="binding site" evidence="5">
    <location>
        <position position="150"/>
    </location>
    <ligand>
        <name>substrate</name>
    </ligand>
</feature>
<feature type="binding site" evidence="3 5">
    <location>
        <position position="150"/>
    </location>
    <ligand>
        <name>Zn(2+)</name>
        <dbReference type="ChEBI" id="CHEBI:29105"/>
        <note>catalytic</note>
    </ligand>
</feature>
<feature type="binding site" evidence="3 5">
    <location>
        <begin position="181"/>
        <end position="184"/>
    </location>
    <ligand>
        <name>NADP(+)</name>
        <dbReference type="ChEBI" id="CHEBI:58349"/>
    </ligand>
</feature>
<feature type="binding site" evidence="3 5">
    <location>
        <begin position="207"/>
        <end position="208"/>
    </location>
    <ligand>
        <name>NADP(+)</name>
        <dbReference type="ChEBI" id="CHEBI:58349"/>
    </ligand>
</feature>
<feature type="binding site" evidence="3 5">
    <location>
        <position position="228"/>
    </location>
    <ligand>
        <name>NADP(+)</name>
        <dbReference type="ChEBI" id="CHEBI:58349"/>
    </ligand>
</feature>
<feature type="binding site" evidence="3 5">
    <location>
        <begin position="272"/>
        <end position="274"/>
    </location>
    <ligand>
        <name>NADP(+)</name>
        <dbReference type="ChEBI" id="CHEBI:58349"/>
    </ligand>
</feature>
<feature type="binding site" evidence="3 5">
    <location>
        <begin position="301"/>
        <end position="303"/>
    </location>
    <ligand>
        <name>NADP(+)</name>
        <dbReference type="ChEBI" id="CHEBI:58349"/>
    </ligand>
</feature>
<feature type="binding site" evidence="5">
    <location>
        <position position="303"/>
    </location>
    <ligand>
        <name>substrate</name>
    </ligand>
</feature>
<feature type="mutagenesis site" description="Does not affect the kinetic parameters but results in a slightly less halotolerant protein." evidence="4">
    <original>D</original>
    <variation>K</variation>
    <location>
        <position position="172"/>
    </location>
</feature>
<feature type="mutagenesis site" description="Does not affect the kinetic parameters but results in a slightly less halotolerant protein." evidence="4">
    <original>D</original>
    <variation>K</variation>
    <location>
        <position position="216"/>
    </location>
</feature>
<feature type="mutagenesis site" description="Does not affect the kinetic parameters and has no effect on the salt activity profile." evidence="4">
    <original>D</original>
    <variation>K</variation>
    <location>
        <position position="344"/>
    </location>
</feature>
<feature type="strand" evidence="9">
    <location>
        <begin position="2"/>
        <end position="7"/>
    </location>
</feature>
<feature type="strand" evidence="9">
    <location>
        <begin position="14"/>
        <end position="17"/>
    </location>
</feature>
<feature type="strand" evidence="9">
    <location>
        <begin position="27"/>
        <end position="37"/>
    </location>
</feature>
<feature type="helix" evidence="9">
    <location>
        <begin position="39"/>
        <end position="46"/>
    </location>
</feature>
<feature type="strand" evidence="10">
    <location>
        <begin position="47"/>
        <end position="49"/>
    </location>
</feature>
<feature type="strand" evidence="9">
    <location>
        <begin position="57"/>
        <end position="60"/>
    </location>
</feature>
<feature type="strand" evidence="9">
    <location>
        <begin position="63"/>
        <end position="71"/>
    </location>
</feature>
<feature type="strand" evidence="9">
    <location>
        <begin position="82"/>
        <end position="85"/>
    </location>
</feature>
<feature type="strand" evidence="9">
    <location>
        <begin position="87"/>
        <end position="89"/>
    </location>
</feature>
<feature type="helix" evidence="9">
    <location>
        <begin position="97"/>
        <end position="100"/>
    </location>
</feature>
<feature type="helix" evidence="9">
    <location>
        <begin position="104"/>
        <end position="106"/>
    </location>
</feature>
<feature type="turn" evidence="9">
    <location>
        <begin position="115"/>
        <end position="117"/>
    </location>
</feature>
<feature type="strand" evidence="9">
    <location>
        <begin position="118"/>
        <end position="120"/>
    </location>
</feature>
<feature type="strand" evidence="9">
    <location>
        <begin position="125"/>
        <end position="131"/>
    </location>
</feature>
<feature type="helix" evidence="9">
    <location>
        <begin position="132"/>
        <end position="134"/>
    </location>
</feature>
<feature type="strand" evidence="9">
    <location>
        <begin position="135"/>
        <end position="137"/>
    </location>
</feature>
<feature type="helix" evidence="9">
    <location>
        <begin position="140"/>
        <end position="142"/>
    </location>
</feature>
<feature type="helix" evidence="9">
    <location>
        <begin position="146"/>
        <end position="148"/>
    </location>
</feature>
<feature type="helix" evidence="9">
    <location>
        <begin position="149"/>
        <end position="164"/>
    </location>
</feature>
<feature type="turn" evidence="9">
    <location>
        <begin position="165"/>
        <end position="168"/>
    </location>
</feature>
<feature type="strand" evidence="9">
    <location>
        <begin position="175"/>
        <end position="179"/>
    </location>
</feature>
<feature type="helix" evidence="9">
    <location>
        <begin position="183"/>
        <end position="194"/>
    </location>
</feature>
<feature type="strand" evidence="9">
    <location>
        <begin position="201"/>
        <end position="206"/>
    </location>
</feature>
<feature type="helix" evidence="9">
    <location>
        <begin position="213"/>
        <end position="220"/>
    </location>
</feature>
<feature type="strand" evidence="9">
    <location>
        <begin position="224"/>
        <end position="227"/>
    </location>
</feature>
<feature type="turn" evidence="9">
    <location>
        <begin position="228"/>
        <end position="230"/>
    </location>
</feature>
<feature type="helix" evidence="9">
    <location>
        <begin position="233"/>
        <end position="235"/>
    </location>
</feature>
<feature type="helix" evidence="9">
    <location>
        <begin position="236"/>
        <end position="239"/>
    </location>
</feature>
<feature type="strand" evidence="9">
    <location>
        <begin position="243"/>
        <end position="248"/>
    </location>
</feature>
<feature type="helix" evidence="9">
    <location>
        <begin position="253"/>
        <end position="262"/>
    </location>
</feature>
<feature type="strand" evidence="9">
    <location>
        <begin position="263"/>
        <end position="271"/>
    </location>
</feature>
<feature type="helix" evidence="9">
    <location>
        <begin position="284"/>
        <end position="293"/>
    </location>
</feature>
<feature type="strand" evidence="9">
    <location>
        <begin position="297"/>
        <end position="300"/>
    </location>
</feature>
<feature type="helix" evidence="9">
    <location>
        <begin position="306"/>
        <end position="318"/>
    </location>
</feature>
<feature type="helix" evidence="9">
    <location>
        <begin position="321"/>
        <end position="327"/>
    </location>
</feature>
<feature type="strand" evidence="9">
    <location>
        <begin position="328"/>
        <end position="333"/>
    </location>
</feature>
<feature type="helix" evidence="9">
    <location>
        <begin position="334"/>
        <end position="341"/>
    </location>
</feature>
<feature type="strand" evidence="9">
    <location>
        <begin position="349"/>
        <end position="353"/>
    </location>
</feature>
<accession>Q977U7</accession>
<accession>I3R3J6</accession>
<evidence type="ECO:0000255" key="1">
    <source>
        <dbReference type="HAMAP-Rule" id="MF_02127"/>
    </source>
</evidence>
<evidence type="ECO:0000269" key="2">
    <source>
    </source>
</evidence>
<evidence type="ECO:0000269" key="3">
    <source>
    </source>
</evidence>
<evidence type="ECO:0000269" key="4">
    <source>
    </source>
</evidence>
<evidence type="ECO:0000269" key="5">
    <source>
    </source>
</evidence>
<evidence type="ECO:0000269" key="6">
    <source>
    </source>
</evidence>
<evidence type="ECO:0000269" key="7">
    <source ref="4"/>
</evidence>
<evidence type="ECO:0000312" key="8">
    <source>
        <dbReference type="EMBL" id="AFK18806.1"/>
    </source>
</evidence>
<evidence type="ECO:0007829" key="9">
    <source>
        <dbReference type="PDB" id="2B5W"/>
    </source>
</evidence>
<evidence type="ECO:0007829" key="10">
    <source>
        <dbReference type="PDB" id="2VWQ"/>
    </source>
</evidence>
<keyword id="KW-0002">3D-structure</keyword>
<keyword id="KW-0119">Carbohydrate metabolism</keyword>
<keyword id="KW-0903">Direct protein sequencing</keyword>
<keyword id="KW-0479">Metal-binding</keyword>
<keyword id="KW-0520">NAD</keyword>
<keyword id="KW-0521">NADP</keyword>
<keyword id="KW-0547">Nucleotide-binding</keyword>
<keyword id="KW-0560">Oxidoreductase</keyword>
<keyword id="KW-0862">Zinc</keyword>
<gene>
    <name evidence="8" type="primary">gdh</name>
    <name type="ordered locus">HFX_1090</name>
</gene>
<proteinExistence type="evidence at protein level"/>